<reference key="1">
    <citation type="journal article" date="2006" name="Proc. Natl. Acad. Sci. U.S.A.">
        <title>Identification of genes subject to positive selection in uropathogenic strains of Escherichia coli: a comparative genomics approach.</title>
        <authorList>
            <person name="Chen S.L."/>
            <person name="Hung C.-S."/>
            <person name="Xu J."/>
            <person name="Reigstad C.S."/>
            <person name="Magrini V."/>
            <person name="Sabo A."/>
            <person name="Blasiar D."/>
            <person name="Bieri T."/>
            <person name="Meyer R.R."/>
            <person name="Ozersky P."/>
            <person name="Armstrong J.R."/>
            <person name="Fulton R.S."/>
            <person name="Latreille J.P."/>
            <person name="Spieth J."/>
            <person name="Hooton T.M."/>
            <person name="Mardis E.R."/>
            <person name="Hultgren S.J."/>
            <person name="Gordon J.I."/>
        </authorList>
    </citation>
    <scope>NUCLEOTIDE SEQUENCE [LARGE SCALE GENOMIC DNA]</scope>
    <source>
        <strain>UTI89 / UPEC</strain>
    </source>
</reference>
<sequence length="565" mass="61915">MAQRIFTLILLLCSTSVFAGLFDAPGRSQFVPADQAFAFDFQQNQHDLNLTWQIKDGYYLYRKQIRITPEHAKIADVQLPQGVWHEDEFYGKSEIYRDRLTLPVTINQASAGATLTVTYQGCADAGFCYPPETKTVPLSEVVANNEASQPVSVPQQEQPTAQLPFSALWALLIGIGIAFTPCVLPMYPLISGIVLGGKQRLSTARALLLTFIYVQGMALTYTALGLVVAAAGLQFQAALQHPYVLIGLAIVFTLLAMSMFGLFTLQLPSSLQTRLTLMSNRQQGGSPGGVFIMGAIAGLICSPCTTAPLSAILLYIAQSGNMWLGGGTLYLYALGMGLPLMLITVFGNRLLPKSGPWMEQVKTAFGFVILALPVFLLERVIGDIWGLRLWSALGVAFFGWAFITSLQAKRGWMRVVQIILLAAALVSVRPLQDWAFGETHTAQTQTHLNFTQIKTVDELNQALVEAKGKPVMLDLYADWCVACKEFEKYTFSDPQVQKALADTVLLQANVTANDAQDVALLKHLNVLGLPTILFFDGQGQEHPQARVTGFMDAETFSAHLRDRQP</sequence>
<name>DSBD_ECOUT</name>
<feature type="signal peptide" evidence="1">
    <location>
        <begin position="1"/>
        <end position="19"/>
    </location>
</feature>
<feature type="chain" id="PRO_0000304386" description="Thiol:disulfide interchange protein DsbD">
    <location>
        <begin position="20"/>
        <end position="565"/>
    </location>
</feature>
<feature type="transmembrane region" description="Helical" evidence="1">
    <location>
        <begin position="163"/>
        <end position="183"/>
    </location>
</feature>
<feature type="transmembrane region" description="Helical" evidence="1">
    <location>
        <begin position="208"/>
        <end position="228"/>
    </location>
</feature>
<feature type="transmembrane region" description="Helical" evidence="1">
    <location>
        <begin position="243"/>
        <end position="263"/>
    </location>
</feature>
<feature type="transmembrane region" description="Helical" evidence="1">
    <location>
        <begin position="289"/>
        <end position="309"/>
    </location>
</feature>
<feature type="transmembrane region" description="Helical" evidence="1">
    <location>
        <begin position="323"/>
        <end position="343"/>
    </location>
</feature>
<feature type="transmembrane region" description="Helical" evidence="1">
    <location>
        <begin position="357"/>
        <end position="377"/>
    </location>
</feature>
<feature type="transmembrane region" description="Helical" evidence="1">
    <location>
        <begin position="384"/>
        <end position="404"/>
    </location>
</feature>
<feature type="domain" description="Thioredoxin" evidence="1">
    <location>
        <begin position="434"/>
        <end position="565"/>
    </location>
</feature>
<feature type="disulfide bond" description="Redox-active" evidence="1">
    <location>
        <begin position="122"/>
        <end position="128"/>
    </location>
</feature>
<feature type="disulfide bond" description="Redox-active" evidence="1">
    <location>
        <begin position="182"/>
        <end position="304"/>
    </location>
</feature>
<feature type="disulfide bond" description="Redox-active" evidence="1">
    <location>
        <begin position="480"/>
        <end position="483"/>
    </location>
</feature>
<organism>
    <name type="scientific">Escherichia coli (strain UTI89 / UPEC)</name>
    <dbReference type="NCBI Taxonomy" id="364106"/>
    <lineage>
        <taxon>Bacteria</taxon>
        <taxon>Pseudomonadati</taxon>
        <taxon>Pseudomonadota</taxon>
        <taxon>Gammaproteobacteria</taxon>
        <taxon>Enterobacterales</taxon>
        <taxon>Enterobacteriaceae</taxon>
        <taxon>Escherichia</taxon>
    </lineage>
</organism>
<dbReference type="EC" id="1.8.1.8" evidence="1"/>
<dbReference type="EMBL" id="CP000243">
    <property type="protein sequence ID" value="ABE10140.1"/>
    <property type="molecule type" value="Genomic_DNA"/>
</dbReference>
<dbReference type="RefSeq" id="WP_000068942.1">
    <property type="nucleotide sequence ID" value="NZ_CP064825.1"/>
</dbReference>
<dbReference type="BMRB" id="Q1R3C4"/>
<dbReference type="SMR" id="Q1R3C4"/>
<dbReference type="KEGG" id="eci:UTI89_C4733"/>
<dbReference type="HOGENOM" id="CLU_014657_3_0_6"/>
<dbReference type="Proteomes" id="UP000001952">
    <property type="component" value="Chromosome"/>
</dbReference>
<dbReference type="GO" id="GO:0005886">
    <property type="term" value="C:plasma membrane"/>
    <property type="evidence" value="ECO:0007669"/>
    <property type="project" value="UniProtKB-SubCell"/>
</dbReference>
<dbReference type="GO" id="GO:0009055">
    <property type="term" value="F:electron transfer activity"/>
    <property type="evidence" value="ECO:0007669"/>
    <property type="project" value="UniProtKB-UniRule"/>
</dbReference>
<dbReference type="GO" id="GO:0047134">
    <property type="term" value="F:protein-disulfide reductase [NAD(P)H] activity"/>
    <property type="evidence" value="ECO:0007669"/>
    <property type="project" value="UniProtKB-UniRule"/>
</dbReference>
<dbReference type="GO" id="GO:0045454">
    <property type="term" value="P:cell redox homeostasis"/>
    <property type="evidence" value="ECO:0007669"/>
    <property type="project" value="TreeGrafter"/>
</dbReference>
<dbReference type="GO" id="GO:0017004">
    <property type="term" value="P:cytochrome complex assembly"/>
    <property type="evidence" value="ECO:0007669"/>
    <property type="project" value="UniProtKB-UniRule"/>
</dbReference>
<dbReference type="CDD" id="cd02953">
    <property type="entry name" value="DsbDgamma"/>
    <property type="match status" value="1"/>
</dbReference>
<dbReference type="FunFam" id="2.60.40.1250:FF:000001">
    <property type="entry name" value="Thiol:disulfide interchange protein DsbD"/>
    <property type="match status" value="1"/>
</dbReference>
<dbReference type="FunFam" id="3.40.30.10:FF:000116">
    <property type="entry name" value="Thiol:disulfide interchange protein DsbD"/>
    <property type="match status" value="1"/>
</dbReference>
<dbReference type="Gene3D" id="3.40.30.10">
    <property type="entry name" value="Glutaredoxin"/>
    <property type="match status" value="1"/>
</dbReference>
<dbReference type="Gene3D" id="2.60.40.1250">
    <property type="entry name" value="Thiol:disulfide interchange protein DsbD, N-terminal domain"/>
    <property type="match status" value="1"/>
</dbReference>
<dbReference type="HAMAP" id="MF_00399">
    <property type="entry name" value="DbsD"/>
    <property type="match status" value="1"/>
</dbReference>
<dbReference type="InterPro" id="IPR003834">
    <property type="entry name" value="Cyt_c_assmbl_TM_dom"/>
</dbReference>
<dbReference type="InterPro" id="IPR035671">
    <property type="entry name" value="DsbD_gamma"/>
</dbReference>
<dbReference type="InterPro" id="IPR028250">
    <property type="entry name" value="DsbDN"/>
</dbReference>
<dbReference type="InterPro" id="IPR036929">
    <property type="entry name" value="DsbDN_sf"/>
</dbReference>
<dbReference type="InterPro" id="IPR022910">
    <property type="entry name" value="Thiol_diS_interchange_DbsD"/>
</dbReference>
<dbReference type="InterPro" id="IPR012336">
    <property type="entry name" value="Thioredoxin-like_fold"/>
</dbReference>
<dbReference type="InterPro" id="IPR036249">
    <property type="entry name" value="Thioredoxin-like_sf"/>
</dbReference>
<dbReference type="InterPro" id="IPR017937">
    <property type="entry name" value="Thioredoxin_CS"/>
</dbReference>
<dbReference type="InterPro" id="IPR013766">
    <property type="entry name" value="Thioredoxin_domain"/>
</dbReference>
<dbReference type="NCBIfam" id="NF001419">
    <property type="entry name" value="PRK00293.1"/>
    <property type="match status" value="1"/>
</dbReference>
<dbReference type="PANTHER" id="PTHR32234">
    <property type="entry name" value="THIOL:DISULFIDE INTERCHANGE PROTEIN DSBD"/>
    <property type="match status" value="1"/>
</dbReference>
<dbReference type="PANTHER" id="PTHR32234:SF0">
    <property type="entry name" value="THIOL:DISULFIDE INTERCHANGE PROTEIN DSBD"/>
    <property type="match status" value="1"/>
</dbReference>
<dbReference type="Pfam" id="PF11412">
    <property type="entry name" value="DsbD_N"/>
    <property type="match status" value="1"/>
</dbReference>
<dbReference type="Pfam" id="PF02683">
    <property type="entry name" value="DsbD_TM"/>
    <property type="match status" value="1"/>
</dbReference>
<dbReference type="Pfam" id="PF13098">
    <property type="entry name" value="Thioredoxin_2"/>
    <property type="match status" value="1"/>
</dbReference>
<dbReference type="SUPFAM" id="SSF74863">
    <property type="entry name" value="Thiol:disulfide interchange protein DsbD, N-terminal domain (DsbD-alpha)"/>
    <property type="match status" value="1"/>
</dbReference>
<dbReference type="SUPFAM" id="SSF52833">
    <property type="entry name" value="Thioredoxin-like"/>
    <property type="match status" value="1"/>
</dbReference>
<dbReference type="PROSITE" id="PS00194">
    <property type="entry name" value="THIOREDOXIN_1"/>
    <property type="match status" value="1"/>
</dbReference>
<dbReference type="PROSITE" id="PS51352">
    <property type="entry name" value="THIOREDOXIN_2"/>
    <property type="match status" value="1"/>
</dbReference>
<gene>
    <name evidence="1" type="primary">dsbD</name>
    <name type="ordered locus">UTI89_C4733</name>
</gene>
<accession>Q1R3C4</accession>
<comment type="function">
    <text evidence="1">Required to facilitate the formation of correct disulfide bonds in some periplasmic proteins and for the assembly of the periplasmic c-type cytochromes. Acts by transferring electrons from cytoplasmic thioredoxin to the periplasm. This transfer involves a cascade of disulfide bond formation and reduction steps.</text>
</comment>
<comment type="catalytic activity">
    <reaction evidence="1">
        <text>[protein]-dithiol + NAD(+) = [protein]-disulfide + NADH + H(+)</text>
        <dbReference type="Rhea" id="RHEA:18749"/>
        <dbReference type="Rhea" id="RHEA-COMP:10593"/>
        <dbReference type="Rhea" id="RHEA-COMP:10594"/>
        <dbReference type="ChEBI" id="CHEBI:15378"/>
        <dbReference type="ChEBI" id="CHEBI:29950"/>
        <dbReference type="ChEBI" id="CHEBI:50058"/>
        <dbReference type="ChEBI" id="CHEBI:57540"/>
        <dbReference type="ChEBI" id="CHEBI:57945"/>
        <dbReference type="EC" id="1.8.1.8"/>
    </reaction>
</comment>
<comment type="catalytic activity">
    <reaction evidence="1">
        <text>[protein]-dithiol + NADP(+) = [protein]-disulfide + NADPH + H(+)</text>
        <dbReference type="Rhea" id="RHEA:18753"/>
        <dbReference type="Rhea" id="RHEA-COMP:10593"/>
        <dbReference type="Rhea" id="RHEA-COMP:10594"/>
        <dbReference type="ChEBI" id="CHEBI:15378"/>
        <dbReference type="ChEBI" id="CHEBI:29950"/>
        <dbReference type="ChEBI" id="CHEBI:50058"/>
        <dbReference type="ChEBI" id="CHEBI:57783"/>
        <dbReference type="ChEBI" id="CHEBI:58349"/>
        <dbReference type="EC" id="1.8.1.8"/>
    </reaction>
</comment>
<comment type="subcellular location">
    <subcellularLocation>
        <location evidence="1">Cell inner membrane</location>
        <topology evidence="1">Multi-pass membrane protein</topology>
    </subcellularLocation>
</comment>
<comment type="similarity">
    <text evidence="1">Belongs to the thioredoxin family. DsbD subfamily.</text>
</comment>
<protein>
    <recommendedName>
        <fullName evidence="1">Thiol:disulfide interchange protein DsbD</fullName>
        <ecNumber evidence="1">1.8.1.8</ecNumber>
    </recommendedName>
    <alternativeName>
        <fullName evidence="1">Protein-disulfide reductase</fullName>
        <shortName evidence="1">Disulfide reductase</shortName>
    </alternativeName>
</protein>
<keyword id="KW-0997">Cell inner membrane</keyword>
<keyword id="KW-1003">Cell membrane</keyword>
<keyword id="KW-0201">Cytochrome c-type biogenesis</keyword>
<keyword id="KW-1015">Disulfide bond</keyword>
<keyword id="KW-0249">Electron transport</keyword>
<keyword id="KW-0472">Membrane</keyword>
<keyword id="KW-0520">NAD</keyword>
<keyword id="KW-0560">Oxidoreductase</keyword>
<keyword id="KW-0676">Redox-active center</keyword>
<keyword id="KW-0732">Signal</keyword>
<keyword id="KW-0812">Transmembrane</keyword>
<keyword id="KW-1133">Transmembrane helix</keyword>
<keyword id="KW-0813">Transport</keyword>
<evidence type="ECO:0000255" key="1">
    <source>
        <dbReference type="HAMAP-Rule" id="MF_00399"/>
    </source>
</evidence>
<proteinExistence type="inferred from homology"/>